<organism>
    <name type="scientific">Ureaplasma urealyticum serovar 10 (strain ATCC 33699 / Western)</name>
    <dbReference type="NCBI Taxonomy" id="565575"/>
    <lineage>
        <taxon>Bacteria</taxon>
        <taxon>Bacillati</taxon>
        <taxon>Mycoplasmatota</taxon>
        <taxon>Mycoplasmoidales</taxon>
        <taxon>Mycoplasmoidaceae</taxon>
        <taxon>Ureaplasma</taxon>
    </lineage>
</organism>
<evidence type="ECO:0000255" key="1">
    <source>
        <dbReference type="HAMAP-Rule" id="MF_01315"/>
    </source>
</evidence>
<evidence type="ECO:0000256" key="2">
    <source>
        <dbReference type="SAM" id="MobiDB-lite"/>
    </source>
</evidence>
<evidence type="ECO:0000305" key="3"/>
<sequence>MARILGVDIPNDKRVVISLTYIFGIGKSTSQKILKLANIDENIRVNDLADEQIAEIRRVALNFVKANGEKLQLEGDLRRTVAMDIKRLMEIGSYRGIRHRRGLPVRGQRTKTNARTRKGPRKTVANKKIETR</sequence>
<name>RS13_UREU1</name>
<comment type="function">
    <text evidence="1">Located at the top of the head of the 30S subunit, it contacts several helices of the 16S rRNA. In the 70S ribosome it contacts the 23S rRNA (bridge B1a) and protein L5 of the 50S subunit (bridge B1b), connecting the 2 subunits; these bridges are implicated in subunit movement. Contacts the tRNAs in the A and P-sites.</text>
</comment>
<comment type="subunit">
    <text evidence="1">Part of the 30S ribosomal subunit. Forms a loose heterodimer with protein S19. Forms two bridges to the 50S subunit in the 70S ribosome.</text>
</comment>
<comment type="similarity">
    <text evidence="1">Belongs to the universal ribosomal protein uS13 family.</text>
</comment>
<feature type="chain" id="PRO_1000141327" description="Small ribosomal subunit protein uS13">
    <location>
        <begin position="1"/>
        <end position="132"/>
    </location>
</feature>
<feature type="region of interest" description="Disordered" evidence="2">
    <location>
        <begin position="101"/>
        <end position="132"/>
    </location>
</feature>
<feature type="compositionally biased region" description="Basic residues" evidence="2">
    <location>
        <begin position="101"/>
        <end position="125"/>
    </location>
</feature>
<accession>B5ZB64</accession>
<dbReference type="EMBL" id="CP001184">
    <property type="protein sequence ID" value="ACI60052.1"/>
    <property type="molecule type" value="Genomic_DNA"/>
</dbReference>
<dbReference type="RefSeq" id="WP_004025797.1">
    <property type="nucleotide sequence ID" value="NC_011374.1"/>
</dbReference>
<dbReference type="SMR" id="B5ZB64"/>
<dbReference type="STRING" id="565575.UUR10_0250"/>
<dbReference type="GeneID" id="93848730"/>
<dbReference type="KEGG" id="uue:UUR10_0250"/>
<dbReference type="eggNOG" id="COG0099">
    <property type="taxonomic scope" value="Bacteria"/>
</dbReference>
<dbReference type="HOGENOM" id="CLU_103849_1_2_14"/>
<dbReference type="OrthoDB" id="9803610at2"/>
<dbReference type="Proteomes" id="UP000002018">
    <property type="component" value="Chromosome"/>
</dbReference>
<dbReference type="GO" id="GO:0005829">
    <property type="term" value="C:cytosol"/>
    <property type="evidence" value="ECO:0007669"/>
    <property type="project" value="TreeGrafter"/>
</dbReference>
<dbReference type="GO" id="GO:0015935">
    <property type="term" value="C:small ribosomal subunit"/>
    <property type="evidence" value="ECO:0007669"/>
    <property type="project" value="TreeGrafter"/>
</dbReference>
<dbReference type="GO" id="GO:0019843">
    <property type="term" value="F:rRNA binding"/>
    <property type="evidence" value="ECO:0007669"/>
    <property type="project" value="UniProtKB-UniRule"/>
</dbReference>
<dbReference type="GO" id="GO:0003735">
    <property type="term" value="F:structural constituent of ribosome"/>
    <property type="evidence" value="ECO:0007669"/>
    <property type="project" value="InterPro"/>
</dbReference>
<dbReference type="GO" id="GO:0000049">
    <property type="term" value="F:tRNA binding"/>
    <property type="evidence" value="ECO:0007669"/>
    <property type="project" value="UniProtKB-UniRule"/>
</dbReference>
<dbReference type="GO" id="GO:0006412">
    <property type="term" value="P:translation"/>
    <property type="evidence" value="ECO:0007669"/>
    <property type="project" value="UniProtKB-UniRule"/>
</dbReference>
<dbReference type="FunFam" id="1.10.8.50:FF:000001">
    <property type="entry name" value="30S ribosomal protein S13"/>
    <property type="match status" value="1"/>
</dbReference>
<dbReference type="FunFam" id="4.10.910.10:FF:000001">
    <property type="entry name" value="30S ribosomal protein S13"/>
    <property type="match status" value="1"/>
</dbReference>
<dbReference type="Gene3D" id="1.10.8.50">
    <property type="match status" value="1"/>
</dbReference>
<dbReference type="Gene3D" id="4.10.910.10">
    <property type="entry name" value="30s ribosomal protein s13, domain 2"/>
    <property type="match status" value="1"/>
</dbReference>
<dbReference type="HAMAP" id="MF_01315">
    <property type="entry name" value="Ribosomal_uS13"/>
    <property type="match status" value="1"/>
</dbReference>
<dbReference type="InterPro" id="IPR027437">
    <property type="entry name" value="Rbsml_uS13_C"/>
</dbReference>
<dbReference type="InterPro" id="IPR001892">
    <property type="entry name" value="Ribosomal_uS13"/>
</dbReference>
<dbReference type="InterPro" id="IPR010979">
    <property type="entry name" value="Ribosomal_uS13-like_H2TH"/>
</dbReference>
<dbReference type="InterPro" id="IPR019980">
    <property type="entry name" value="Ribosomal_uS13_bac-type"/>
</dbReference>
<dbReference type="InterPro" id="IPR018269">
    <property type="entry name" value="Ribosomal_uS13_CS"/>
</dbReference>
<dbReference type="NCBIfam" id="TIGR03631">
    <property type="entry name" value="uS13_bact"/>
    <property type="match status" value="1"/>
</dbReference>
<dbReference type="PANTHER" id="PTHR10871">
    <property type="entry name" value="30S RIBOSOMAL PROTEIN S13/40S RIBOSOMAL PROTEIN S18"/>
    <property type="match status" value="1"/>
</dbReference>
<dbReference type="PANTHER" id="PTHR10871:SF1">
    <property type="entry name" value="SMALL RIBOSOMAL SUBUNIT PROTEIN US13M"/>
    <property type="match status" value="1"/>
</dbReference>
<dbReference type="Pfam" id="PF00416">
    <property type="entry name" value="Ribosomal_S13"/>
    <property type="match status" value="1"/>
</dbReference>
<dbReference type="PIRSF" id="PIRSF002134">
    <property type="entry name" value="Ribosomal_S13"/>
    <property type="match status" value="1"/>
</dbReference>
<dbReference type="SUPFAM" id="SSF46946">
    <property type="entry name" value="S13-like H2TH domain"/>
    <property type="match status" value="1"/>
</dbReference>
<dbReference type="PROSITE" id="PS00646">
    <property type="entry name" value="RIBOSOMAL_S13_1"/>
    <property type="match status" value="1"/>
</dbReference>
<dbReference type="PROSITE" id="PS50159">
    <property type="entry name" value="RIBOSOMAL_S13_2"/>
    <property type="match status" value="1"/>
</dbReference>
<protein>
    <recommendedName>
        <fullName evidence="1">Small ribosomal subunit protein uS13</fullName>
    </recommendedName>
    <alternativeName>
        <fullName evidence="3">30S ribosomal protein S13</fullName>
    </alternativeName>
</protein>
<keyword id="KW-0687">Ribonucleoprotein</keyword>
<keyword id="KW-0689">Ribosomal protein</keyword>
<keyword id="KW-0694">RNA-binding</keyword>
<keyword id="KW-0699">rRNA-binding</keyword>
<keyword id="KW-0820">tRNA-binding</keyword>
<gene>
    <name evidence="1" type="primary">rpsM</name>
    <name type="ordered locus">UUR10_0250</name>
</gene>
<proteinExistence type="inferred from homology"/>
<reference key="1">
    <citation type="submission" date="2008-10" db="EMBL/GenBank/DDBJ databases">
        <title>Genome sequence of Ureaplasma urealyticum serovar 10 ATCC-33699.</title>
        <authorList>
            <person name="Shrivastava S."/>
            <person name="Methe B.A."/>
            <person name="Glass J."/>
            <person name="White K."/>
            <person name="Duffy L.B."/>
        </authorList>
    </citation>
    <scope>NUCLEOTIDE SEQUENCE [LARGE SCALE GENOMIC DNA]</scope>
    <source>
        <strain>ATCC 33699 / Western</strain>
    </source>
</reference>